<protein>
    <recommendedName>
        <fullName evidence="1">Pantothenate synthetase</fullName>
        <shortName evidence="1">PS</shortName>
        <ecNumber evidence="1">6.3.2.1</ecNumber>
    </recommendedName>
    <alternativeName>
        <fullName evidence="1">Pantoate--beta-alanine ligase</fullName>
    </alternativeName>
    <alternativeName>
        <fullName evidence="1">Pantoate-activating enzyme</fullName>
    </alternativeName>
</protein>
<sequence length="281" mass="31823">MNIVNTIKDVRLIIKKWKDENLSIGYVPTMGYLHEGHTSLIKKAREENDKVIVSIFVNPIQFGPKEDYSTYPRDLVKDSSLCEKFGVDLIFNPETSEMYPNKIYSHINVDILTENLCGEKRPGHFQGVCTVLTKFFNILNPTKAYLGEKDAQQLAVVKKMVEDLNFPIEIIGCPIIREEDGLAKSSRNAYLNKQERKSALILNKSLKEALKALESGEKNLNNIKDIIVSKLNKEPLAKIDYVSIVDSITLQSVEKIQSSILVAIAVYIGKTRLIDNFTFKL</sequence>
<proteinExistence type="inferred from homology"/>
<reference key="1">
    <citation type="journal article" date="2007" name="PLoS ONE">
        <title>Analysis of the neurotoxin complex genes in Clostridium botulinum A1-A4 and B1 strains: BoNT/A3, /Ba4 and /B1 clusters are located within plasmids.</title>
        <authorList>
            <person name="Smith T.J."/>
            <person name="Hill K.K."/>
            <person name="Foley B.T."/>
            <person name="Detter J.C."/>
            <person name="Munk A.C."/>
            <person name="Bruce D.C."/>
            <person name="Doggett N.A."/>
            <person name="Smith L.A."/>
            <person name="Marks J.D."/>
            <person name="Xie G."/>
            <person name="Brettin T.S."/>
        </authorList>
    </citation>
    <scope>NUCLEOTIDE SEQUENCE [LARGE SCALE GENOMIC DNA]</scope>
    <source>
        <strain>ATCC 19397 / Type A</strain>
    </source>
</reference>
<evidence type="ECO:0000255" key="1">
    <source>
        <dbReference type="HAMAP-Rule" id="MF_00158"/>
    </source>
</evidence>
<organism>
    <name type="scientific">Clostridium botulinum (strain ATCC 19397 / Type A)</name>
    <dbReference type="NCBI Taxonomy" id="441770"/>
    <lineage>
        <taxon>Bacteria</taxon>
        <taxon>Bacillati</taxon>
        <taxon>Bacillota</taxon>
        <taxon>Clostridia</taxon>
        <taxon>Eubacteriales</taxon>
        <taxon>Clostridiaceae</taxon>
        <taxon>Clostridium</taxon>
    </lineage>
</organism>
<dbReference type="EC" id="6.3.2.1" evidence="1"/>
<dbReference type="EMBL" id="CP000726">
    <property type="protein sequence ID" value="ABS35068.1"/>
    <property type="molecule type" value="Genomic_DNA"/>
</dbReference>
<dbReference type="RefSeq" id="WP_011986120.1">
    <property type="nucleotide sequence ID" value="NC_009697.1"/>
</dbReference>
<dbReference type="SMR" id="A7FR59"/>
<dbReference type="KEGG" id="cba:CLB_0457"/>
<dbReference type="HOGENOM" id="CLU_047148_0_0_9"/>
<dbReference type="UniPathway" id="UPA00028">
    <property type="reaction ID" value="UER00005"/>
</dbReference>
<dbReference type="GO" id="GO:0005829">
    <property type="term" value="C:cytosol"/>
    <property type="evidence" value="ECO:0007669"/>
    <property type="project" value="TreeGrafter"/>
</dbReference>
<dbReference type="GO" id="GO:0005524">
    <property type="term" value="F:ATP binding"/>
    <property type="evidence" value="ECO:0007669"/>
    <property type="project" value="UniProtKB-KW"/>
</dbReference>
<dbReference type="GO" id="GO:0004592">
    <property type="term" value="F:pantoate-beta-alanine ligase activity"/>
    <property type="evidence" value="ECO:0007669"/>
    <property type="project" value="UniProtKB-UniRule"/>
</dbReference>
<dbReference type="GO" id="GO:0015940">
    <property type="term" value="P:pantothenate biosynthetic process"/>
    <property type="evidence" value="ECO:0007669"/>
    <property type="project" value="UniProtKB-UniRule"/>
</dbReference>
<dbReference type="CDD" id="cd00560">
    <property type="entry name" value="PanC"/>
    <property type="match status" value="1"/>
</dbReference>
<dbReference type="FunFam" id="3.30.1300.10:FF:000001">
    <property type="entry name" value="Pantothenate synthetase"/>
    <property type="match status" value="1"/>
</dbReference>
<dbReference type="FunFam" id="3.40.50.620:FF:000013">
    <property type="entry name" value="Pantothenate synthetase"/>
    <property type="match status" value="1"/>
</dbReference>
<dbReference type="Gene3D" id="3.40.50.620">
    <property type="entry name" value="HUPs"/>
    <property type="match status" value="1"/>
</dbReference>
<dbReference type="Gene3D" id="3.30.1300.10">
    <property type="entry name" value="Pantoate-beta-alanine ligase, C-terminal domain"/>
    <property type="match status" value="1"/>
</dbReference>
<dbReference type="HAMAP" id="MF_00158">
    <property type="entry name" value="PanC"/>
    <property type="match status" value="1"/>
</dbReference>
<dbReference type="InterPro" id="IPR004821">
    <property type="entry name" value="Cyt_trans-like"/>
</dbReference>
<dbReference type="InterPro" id="IPR003721">
    <property type="entry name" value="Pantoate_ligase"/>
</dbReference>
<dbReference type="InterPro" id="IPR042176">
    <property type="entry name" value="Pantoate_ligase_C"/>
</dbReference>
<dbReference type="InterPro" id="IPR014729">
    <property type="entry name" value="Rossmann-like_a/b/a_fold"/>
</dbReference>
<dbReference type="NCBIfam" id="TIGR00125">
    <property type="entry name" value="cyt_tran_rel"/>
    <property type="match status" value="1"/>
</dbReference>
<dbReference type="NCBIfam" id="TIGR00018">
    <property type="entry name" value="panC"/>
    <property type="match status" value="1"/>
</dbReference>
<dbReference type="PANTHER" id="PTHR21299">
    <property type="entry name" value="CYTIDYLATE KINASE/PANTOATE-BETA-ALANINE LIGASE"/>
    <property type="match status" value="1"/>
</dbReference>
<dbReference type="PANTHER" id="PTHR21299:SF1">
    <property type="entry name" value="PANTOATE--BETA-ALANINE LIGASE"/>
    <property type="match status" value="1"/>
</dbReference>
<dbReference type="Pfam" id="PF02569">
    <property type="entry name" value="Pantoate_ligase"/>
    <property type="match status" value="1"/>
</dbReference>
<dbReference type="SUPFAM" id="SSF52374">
    <property type="entry name" value="Nucleotidylyl transferase"/>
    <property type="match status" value="1"/>
</dbReference>
<feature type="chain" id="PRO_1000097049" description="Pantothenate synthetase">
    <location>
        <begin position="1"/>
        <end position="281"/>
    </location>
</feature>
<feature type="active site" description="Proton donor" evidence="1">
    <location>
        <position position="37"/>
    </location>
</feature>
<feature type="binding site" evidence="1">
    <location>
        <begin position="30"/>
        <end position="37"/>
    </location>
    <ligand>
        <name>ATP</name>
        <dbReference type="ChEBI" id="CHEBI:30616"/>
    </ligand>
</feature>
<feature type="binding site" evidence="1">
    <location>
        <position position="61"/>
    </location>
    <ligand>
        <name>(R)-pantoate</name>
        <dbReference type="ChEBI" id="CHEBI:15980"/>
    </ligand>
</feature>
<feature type="binding site" evidence="1">
    <location>
        <position position="61"/>
    </location>
    <ligand>
        <name>beta-alanine</name>
        <dbReference type="ChEBI" id="CHEBI:57966"/>
    </ligand>
</feature>
<feature type="binding site" evidence="1">
    <location>
        <begin position="147"/>
        <end position="150"/>
    </location>
    <ligand>
        <name>ATP</name>
        <dbReference type="ChEBI" id="CHEBI:30616"/>
    </ligand>
</feature>
<feature type="binding site" evidence="1">
    <location>
        <position position="153"/>
    </location>
    <ligand>
        <name>(R)-pantoate</name>
        <dbReference type="ChEBI" id="CHEBI:15980"/>
    </ligand>
</feature>
<feature type="binding site" evidence="1">
    <location>
        <position position="176"/>
    </location>
    <ligand>
        <name>ATP</name>
        <dbReference type="ChEBI" id="CHEBI:30616"/>
    </ligand>
</feature>
<feature type="binding site" evidence="1">
    <location>
        <begin position="184"/>
        <end position="187"/>
    </location>
    <ligand>
        <name>ATP</name>
        <dbReference type="ChEBI" id="CHEBI:30616"/>
    </ligand>
</feature>
<keyword id="KW-0067">ATP-binding</keyword>
<keyword id="KW-0963">Cytoplasm</keyword>
<keyword id="KW-0436">Ligase</keyword>
<keyword id="KW-0547">Nucleotide-binding</keyword>
<keyword id="KW-0566">Pantothenate biosynthesis</keyword>
<accession>A7FR59</accession>
<gene>
    <name evidence="1" type="primary">panC</name>
    <name type="ordered locus">CLB_0457</name>
</gene>
<comment type="function">
    <text evidence="1">Catalyzes the condensation of pantoate with beta-alanine in an ATP-dependent reaction via a pantoyl-adenylate intermediate.</text>
</comment>
<comment type="catalytic activity">
    <reaction evidence="1">
        <text>(R)-pantoate + beta-alanine + ATP = (R)-pantothenate + AMP + diphosphate + H(+)</text>
        <dbReference type="Rhea" id="RHEA:10912"/>
        <dbReference type="ChEBI" id="CHEBI:15378"/>
        <dbReference type="ChEBI" id="CHEBI:15980"/>
        <dbReference type="ChEBI" id="CHEBI:29032"/>
        <dbReference type="ChEBI" id="CHEBI:30616"/>
        <dbReference type="ChEBI" id="CHEBI:33019"/>
        <dbReference type="ChEBI" id="CHEBI:57966"/>
        <dbReference type="ChEBI" id="CHEBI:456215"/>
        <dbReference type="EC" id="6.3.2.1"/>
    </reaction>
</comment>
<comment type="pathway">
    <text evidence="1">Cofactor biosynthesis; (R)-pantothenate biosynthesis; (R)-pantothenate from (R)-pantoate and beta-alanine: step 1/1.</text>
</comment>
<comment type="subunit">
    <text evidence="1">Homodimer.</text>
</comment>
<comment type="subcellular location">
    <subcellularLocation>
        <location evidence="1">Cytoplasm</location>
    </subcellularLocation>
</comment>
<comment type="miscellaneous">
    <text evidence="1">The reaction proceeds by a bi uni uni bi ping pong mechanism.</text>
</comment>
<comment type="similarity">
    <text evidence="1">Belongs to the pantothenate synthetase family.</text>
</comment>
<name>PANC_CLOB1</name>